<keyword id="KW-0963">Cytoplasm</keyword>
<keyword id="KW-0484">Methanogenesis</keyword>
<keyword id="KW-0554">One-carbon metabolism</keyword>
<keyword id="KW-0560">Oxidoreductase</keyword>
<organism>
    <name type="scientific">Methanolobus tindarius</name>
    <dbReference type="NCBI Taxonomy" id="2221"/>
    <lineage>
        <taxon>Archaea</taxon>
        <taxon>Methanobacteriati</taxon>
        <taxon>Methanobacteriota</taxon>
        <taxon>Stenosarchaea group</taxon>
        <taxon>Methanomicrobia</taxon>
        <taxon>Methanosarcinales</taxon>
        <taxon>Methanosarcinaceae</taxon>
        <taxon>Methanolobus</taxon>
    </lineage>
</organism>
<dbReference type="EC" id="1.5.98.2" evidence="1"/>
<dbReference type="EMBL" id="AJ011519">
    <property type="protein sequence ID" value="CAB56639.1"/>
    <property type="molecule type" value="Genomic_DNA"/>
</dbReference>
<dbReference type="PIR" id="T45226">
    <property type="entry name" value="T45226"/>
</dbReference>
<dbReference type="SMR" id="Q9UXP0"/>
<dbReference type="UniPathway" id="UPA00640">
    <property type="reaction ID" value="UER00697"/>
</dbReference>
<dbReference type="GO" id="GO:0005737">
    <property type="term" value="C:cytoplasm"/>
    <property type="evidence" value="ECO:0007669"/>
    <property type="project" value="UniProtKB-SubCell"/>
</dbReference>
<dbReference type="GO" id="GO:0018537">
    <property type="term" value="F:coenzyme F420-dependent N5,N10-methenyltetrahydromethanopterin reductase activity"/>
    <property type="evidence" value="ECO:0007669"/>
    <property type="project" value="UniProtKB-UniRule"/>
</dbReference>
<dbReference type="GO" id="GO:0016705">
    <property type="term" value="F:oxidoreductase activity, acting on paired donors, with incorporation or reduction of molecular oxygen"/>
    <property type="evidence" value="ECO:0007669"/>
    <property type="project" value="InterPro"/>
</dbReference>
<dbReference type="GO" id="GO:0019386">
    <property type="term" value="P:methanogenesis, from carbon dioxide"/>
    <property type="evidence" value="ECO:0007669"/>
    <property type="project" value="UniProtKB-UniRule"/>
</dbReference>
<dbReference type="GO" id="GO:0006730">
    <property type="term" value="P:one-carbon metabolic process"/>
    <property type="evidence" value="ECO:0007669"/>
    <property type="project" value="UniProtKB-UniRule"/>
</dbReference>
<dbReference type="CDD" id="cd01097">
    <property type="entry name" value="Tetrahydromethanopterin_reductase"/>
    <property type="match status" value="1"/>
</dbReference>
<dbReference type="Gene3D" id="3.20.20.30">
    <property type="entry name" value="Luciferase-like domain"/>
    <property type="match status" value="1"/>
</dbReference>
<dbReference type="HAMAP" id="MF_01091">
    <property type="entry name" value="F420_mer"/>
    <property type="match status" value="1"/>
</dbReference>
<dbReference type="InterPro" id="IPR050564">
    <property type="entry name" value="F420-G6PD/mer"/>
</dbReference>
<dbReference type="InterPro" id="IPR011251">
    <property type="entry name" value="Luciferase-like_dom"/>
</dbReference>
<dbReference type="InterPro" id="IPR036661">
    <property type="entry name" value="Luciferase-like_sf"/>
</dbReference>
<dbReference type="InterPro" id="IPR019946">
    <property type="entry name" value="MeH4methanopterin_reductase"/>
</dbReference>
<dbReference type="NCBIfam" id="TIGR03555">
    <property type="entry name" value="F420_mer"/>
    <property type="match status" value="1"/>
</dbReference>
<dbReference type="NCBIfam" id="NF002619">
    <property type="entry name" value="PRK02271.1"/>
    <property type="match status" value="1"/>
</dbReference>
<dbReference type="PANTHER" id="PTHR43244">
    <property type="match status" value="1"/>
</dbReference>
<dbReference type="PANTHER" id="PTHR43244:SF1">
    <property type="entry name" value="5,10-METHYLENETETRAHYDROMETHANOPTERIN REDUCTASE"/>
    <property type="match status" value="1"/>
</dbReference>
<dbReference type="Pfam" id="PF00296">
    <property type="entry name" value="Bac_luciferase"/>
    <property type="match status" value="1"/>
</dbReference>
<dbReference type="SUPFAM" id="SSF51679">
    <property type="entry name" value="Bacterial luciferase-like"/>
    <property type="match status" value="1"/>
</dbReference>
<accession>Q9UXP0</accession>
<name>MER_METTI</name>
<reference key="1">
    <citation type="journal article" date="1999" name="FEMS Microbiol. Lett.">
        <title>The F420H2-dehydrogenase from Methanolobus tindarius: cloning of the ffd operon and expression of the genes in Escherichia coli.</title>
        <authorList>
            <person name="Westenberg D.J."/>
            <person name="Braune A."/>
            <person name="Ruppert C."/>
            <person name="Mueller V."/>
            <person name="Herzberg C."/>
            <person name="Gottschalk G."/>
            <person name="Blaut M."/>
        </authorList>
    </citation>
    <scope>NUCLEOTIDE SEQUENCE [GENOMIC DNA]</scope>
    <source>
        <strain>ATCC 35996 / DSM 2278 / OCM 150 / Tindari 3</strain>
    </source>
</reference>
<proteinExistence type="inferred from homology"/>
<evidence type="ECO:0000255" key="1">
    <source>
        <dbReference type="HAMAP-Rule" id="MF_01091"/>
    </source>
</evidence>
<sequence>MTFGIEFVPSDPVLKIAHYAKLAEQQGFDNVWITDHYNNRDVYSTLTVLAMNTNSIKLGTGVTNPYTRNAAITASSIGSLNEISGGRAILGLGPGEQATFDAMGISWEQPLTTTKESIAAIRGFLAGEKVTMDGDMIKFGGAKMAFKAGDVPIYMGAQGPKMLELAGEVSDGVLINASHPKDFEVAVKQIAAGAKKAGRDPKEVDVAAYACFSIDKDAAKAKSAAQIVVAFIVAGSPDMVLERHGIDPAAKADIGGAIAKGDFGALMGGMVTDSMMDAFSICGTPDDCKARINELLDIGVTQIVAGSPIGPNKEKAIKLIGKEIIG</sequence>
<comment type="function">
    <text evidence="1">Catalyzes the reversible reduction of methylene-H(4)MPT to methyl-H(4)MPT.</text>
</comment>
<comment type="catalytic activity">
    <reaction evidence="1">
        <text>5-methyl-5,6,7,8-tetrahydromethanopterin + oxidized coenzyme F420-(gamma-L-Glu)(n) + H(+) = 5,10-methylenetetrahydromethanopterin + reduced coenzyme F420-(gamma-L-Glu)(n)</text>
        <dbReference type="Rhea" id="RHEA:21144"/>
        <dbReference type="Rhea" id="RHEA-COMP:12939"/>
        <dbReference type="Rhea" id="RHEA-COMP:14378"/>
        <dbReference type="ChEBI" id="CHEBI:15378"/>
        <dbReference type="ChEBI" id="CHEBI:57818"/>
        <dbReference type="ChEBI" id="CHEBI:58116"/>
        <dbReference type="ChEBI" id="CHEBI:133980"/>
        <dbReference type="ChEBI" id="CHEBI:139511"/>
        <dbReference type="EC" id="1.5.98.2"/>
    </reaction>
</comment>
<comment type="pathway">
    <text evidence="1">One-carbon metabolism; methanogenesis from CO(2); methyl-coenzyme M from 5,10-methylene-5,6,7,8-tetrahydromethanopterin: step 1/2.</text>
</comment>
<comment type="subcellular location">
    <subcellularLocation>
        <location evidence="1">Cytoplasm</location>
    </subcellularLocation>
</comment>
<comment type="similarity">
    <text evidence="1">Belongs to the mer family.</text>
</comment>
<gene>
    <name evidence="1" type="primary">mer</name>
    <name type="synonym">ffdA</name>
</gene>
<feature type="chain" id="PRO_0000084811" description="5,10-methylenetetrahydromethanopterin reductase">
    <location>
        <begin position="1"/>
        <end position="326"/>
    </location>
</feature>
<protein>
    <recommendedName>
        <fullName evidence="1">5,10-methylenetetrahydromethanopterin reductase</fullName>
        <ecNumber evidence="1">1.5.98.2</ecNumber>
    </recommendedName>
    <alternativeName>
        <fullName evidence="1">Coenzyme F420-dependent N(5),N(10)-methylenetetrahydromethanopterin reductase</fullName>
    </alternativeName>
    <alternativeName>
        <fullName evidence="1">Methylene-H(4)MPT reductase</fullName>
    </alternativeName>
</protein>